<accession>O96771</accession>
<accession>Q8SQY5</accession>
<proteinExistence type="evidence at protein level"/>
<protein>
    <recommendedName>
        <fullName>Tryptophan--tRNA ligase</fullName>
        <ecNumber>6.1.1.2</ecNumber>
    </recommendedName>
    <alternativeName>
        <fullName>Tryptophanyl-tRNA synthetase</fullName>
        <shortName>TrpRS</shortName>
    </alternativeName>
</protein>
<organism>
    <name type="scientific">Encephalitozoon cuniculi (strain GB-M1)</name>
    <name type="common">Microsporidian parasite</name>
    <dbReference type="NCBI Taxonomy" id="284813"/>
    <lineage>
        <taxon>Eukaryota</taxon>
        <taxon>Fungi</taxon>
        <taxon>Fungi incertae sedis</taxon>
        <taxon>Microsporidia</taxon>
        <taxon>Unikaryonidae</taxon>
        <taxon>Encephalitozoon</taxon>
    </lineage>
</organism>
<reference key="1">
    <citation type="journal article" date="2001" name="Nature">
        <title>Genome sequence and gene compaction of the eukaryote parasite Encephalitozoon cuniculi.</title>
        <authorList>
            <person name="Katinka M.D."/>
            <person name="Duprat S."/>
            <person name="Cornillot E."/>
            <person name="Metenier G."/>
            <person name="Thomarat F."/>
            <person name="Prensier G."/>
            <person name="Barbe V."/>
            <person name="Peyretaillade E."/>
            <person name="Brottier P."/>
            <person name="Wincker P."/>
            <person name="Delbac F."/>
            <person name="El Alaoui H."/>
            <person name="Peyret P."/>
            <person name="Saurin W."/>
            <person name="Gouy M."/>
            <person name="Weissenbach J."/>
            <person name="Vivares C.P."/>
        </authorList>
    </citation>
    <scope>NUCLEOTIDE SEQUENCE [LARGE SCALE GENOMIC DNA]</scope>
    <source>
        <strain>GB-M1</strain>
    </source>
</reference>
<reference key="2">
    <citation type="journal article" date="1998" name="Mol. Biol. Evol.">
        <title>Microsporidia, amitochondrial protists, possess a 70-kDa heat shock protein gene of mitochondrial evolutionary origin.</title>
        <authorList>
            <person name="Peyretaillade E."/>
            <person name="Broussolle V."/>
            <person name="Peyret P."/>
            <person name="Metenier G."/>
            <person name="Gouy M."/>
            <person name="Vivares C.P."/>
        </authorList>
    </citation>
    <scope>NUCLEOTIDE SEQUENCE [GENOMIC DNA] OF 1-134</scope>
</reference>
<reference key="3">
    <citation type="journal article" date="2006" name="Proteomics">
        <title>Proteomic analysis of the eukaryotic parasite Encephalitozoon cuniculi (microsporidia): a reference map for proteins expressed in late sporogonial stages.</title>
        <authorList>
            <person name="Brosson D."/>
            <person name="Kuhn L."/>
            <person name="Delbac F."/>
            <person name="Garin J."/>
            <person name="Vivares C.P."/>
            <person name="Texier C."/>
        </authorList>
    </citation>
    <scope>IDENTIFICATION BY MASS SPECTROMETRY [LARGE SCALE ANALYSIS]</scope>
    <scope>DEVELOPMENTAL STAGE</scope>
</reference>
<dbReference type="EC" id="6.1.1.2"/>
<dbReference type="EMBL" id="AL590450">
    <property type="protein sequence ID" value="CAD25963.1"/>
    <property type="molecule type" value="Genomic_DNA"/>
</dbReference>
<dbReference type="EMBL" id="AJ012470">
    <property type="protein sequence ID" value="CAA10034.1"/>
    <property type="molecule type" value="Genomic_DNA"/>
</dbReference>
<dbReference type="PIR" id="T43806">
    <property type="entry name" value="T43806"/>
</dbReference>
<dbReference type="RefSeq" id="NP_586359.1">
    <property type="nucleotide sequence ID" value="NM_001042192.1"/>
</dbReference>
<dbReference type="PDB" id="3TZE">
    <property type="method" value="X-ray"/>
    <property type="resolution" value="2.60 A"/>
    <property type="chains" value="A/B=1-385"/>
</dbReference>
<dbReference type="PDBsum" id="3TZE"/>
<dbReference type="SMR" id="O96771"/>
<dbReference type="FunCoup" id="O96771">
    <property type="interactions" value="308"/>
</dbReference>
<dbReference type="STRING" id="284813.O96771"/>
<dbReference type="GeneID" id="860012"/>
<dbReference type="KEGG" id="ecu:ECU11_0530"/>
<dbReference type="VEuPathDB" id="MicrosporidiaDB:ECU11_0530"/>
<dbReference type="HOGENOM" id="CLU_032621_0_1_1"/>
<dbReference type="InParanoid" id="O96771"/>
<dbReference type="OMA" id="SIYHRFM"/>
<dbReference type="OrthoDB" id="10261385at2759"/>
<dbReference type="EvolutionaryTrace" id="O96771"/>
<dbReference type="Proteomes" id="UP000000819">
    <property type="component" value="Chromosome XI"/>
</dbReference>
<dbReference type="GO" id="GO:0005737">
    <property type="term" value="C:cytoplasm"/>
    <property type="evidence" value="ECO:0007669"/>
    <property type="project" value="TreeGrafter"/>
</dbReference>
<dbReference type="GO" id="GO:0005524">
    <property type="term" value="F:ATP binding"/>
    <property type="evidence" value="ECO:0007669"/>
    <property type="project" value="UniProtKB-KW"/>
</dbReference>
<dbReference type="GO" id="GO:0004830">
    <property type="term" value="F:tryptophan-tRNA ligase activity"/>
    <property type="evidence" value="ECO:0007669"/>
    <property type="project" value="UniProtKB-EC"/>
</dbReference>
<dbReference type="GO" id="GO:0006436">
    <property type="term" value="P:tryptophanyl-tRNA aminoacylation"/>
    <property type="evidence" value="ECO:0007669"/>
    <property type="project" value="InterPro"/>
</dbReference>
<dbReference type="CDD" id="cd00806">
    <property type="entry name" value="TrpRS_core"/>
    <property type="match status" value="1"/>
</dbReference>
<dbReference type="FunFam" id="1.10.240.10:FF:000007">
    <property type="entry name" value="Tryptophan--tRNA ligase"/>
    <property type="match status" value="1"/>
</dbReference>
<dbReference type="Gene3D" id="3.40.50.620">
    <property type="entry name" value="HUPs"/>
    <property type="match status" value="1"/>
</dbReference>
<dbReference type="Gene3D" id="1.10.240.10">
    <property type="entry name" value="Tyrosyl-Transfer RNA Synthetase"/>
    <property type="match status" value="1"/>
</dbReference>
<dbReference type="InterPro" id="IPR001412">
    <property type="entry name" value="aa-tRNA-synth_I_CS"/>
</dbReference>
<dbReference type="InterPro" id="IPR002305">
    <property type="entry name" value="aa-tRNA-synth_Ic"/>
</dbReference>
<dbReference type="InterPro" id="IPR014729">
    <property type="entry name" value="Rossmann-like_a/b/a_fold"/>
</dbReference>
<dbReference type="InterPro" id="IPR002306">
    <property type="entry name" value="Trp-tRNA-ligase"/>
</dbReference>
<dbReference type="NCBIfam" id="TIGR00233">
    <property type="entry name" value="trpS"/>
    <property type="match status" value="1"/>
</dbReference>
<dbReference type="PANTHER" id="PTHR10055:SF1">
    <property type="entry name" value="TRYPTOPHAN--TRNA LIGASE, CYTOPLASMIC"/>
    <property type="match status" value="1"/>
</dbReference>
<dbReference type="PANTHER" id="PTHR10055">
    <property type="entry name" value="TRYPTOPHANYL-TRNA SYNTHETASE"/>
    <property type="match status" value="1"/>
</dbReference>
<dbReference type="Pfam" id="PF00579">
    <property type="entry name" value="tRNA-synt_1b"/>
    <property type="match status" value="1"/>
</dbReference>
<dbReference type="PRINTS" id="PR01039">
    <property type="entry name" value="TRNASYNTHTRP"/>
</dbReference>
<dbReference type="SUPFAM" id="SSF52374">
    <property type="entry name" value="Nucleotidylyl transferase"/>
    <property type="match status" value="1"/>
</dbReference>
<dbReference type="PROSITE" id="PS00178">
    <property type="entry name" value="AA_TRNA_LIGASE_I"/>
    <property type="match status" value="1"/>
</dbReference>
<gene>
    <name type="ordered locus">ECU11_0530</name>
</gene>
<feature type="chain" id="PRO_0000136742" description="Tryptophan--tRNA ligase">
    <location>
        <begin position="1"/>
        <end position="385"/>
    </location>
</feature>
<feature type="short sequence motif" description="'HIGH' region">
    <location>
        <begin position="89"/>
        <end position="98"/>
    </location>
</feature>
<feature type="short sequence motif" description="'KMSKS' region">
    <location>
        <begin position="268"/>
        <end position="272"/>
    </location>
</feature>
<feature type="helix" evidence="4">
    <location>
        <begin position="25"/>
        <end position="30"/>
    </location>
</feature>
<feature type="turn" evidence="4">
    <location>
        <begin position="31"/>
        <end position="33"/>
    </location>
</feature>
<feature type="helix" evidence="4">
    <location>
        <begin position="39"/>
        <end position="49"/>
    </location>
</feature>
<feature type="helix" evidence="4">
    <location>
        <begin position="55"/>
        <end position="58"/>
    </location>
</feature>
<feature type="strand" evidence="4">
    <location>
        <begin position="61"/>
        <end position="67"/>
    </location>
</feature>
<feature type="helix" evidence="4">
    <location>
        <begin position="68"/>
        <end position="76"/>
    </location>
</feature>
<feature type="strand" evidence="4">
    <location>
        <begin position="81"/>
        <end position="87"/>
    </location>
</feature>
<feature type="helix" evidence="4">
    <location>
        <begin position="96"/>
        <end position="98"/>
    </location>
</feature>
<feature type="helix" evidence="4">
    <location>
        <begin position="99"/>
        <end position="112"/>
    </location>
</feature>
<feature type="strand" evidence="4">
    <location>
        <begin position="116"/>
        <end position="120"/>
    </location>
</feature>
<feature type="helix" evidence="4">
    <location>
        <begin position="122"/>
        <end position="128"/>
    </location>
</feature>
<feature type="helix" evidence="4">
    <location>
        <begin position="133"/>
        <end position="148"/>
    </location>
</feature>
<feature type="turn" evidence="4">
    <location>
        <begin position="149"/>
        <end position="151"/>
    </location>
</feature>
<feature type="helix" evidence="4">
    <location>
        <begin position="154"/>
        <end position="156"/>
    </location>
</feature>
<feature type="strand" evidence="4">
    <location>
        <begin position="157"/>
        <end position="161"/>
    </location>
</feature>
<feature type="helix" evidence="4">
    <location>
        <begin position="162"/>
        <end position="165"/>
    </location>
</feature>
<feature type="helix" evidence="4">
    <location>
        <begin position="166"/>
        <end position="169"/>
    </location>
</feature>
<feature type="helix" evidence="4">
    <location>
        <begin position="170"/>
        <end position="178"/>
    </location>
</feature>
<feature type="helix" evidence="4">
    <location>
        <begin position="182"/>
        <end position="189"/>
    </location>
</feature>
<feature type="helix" evidence="4">
    <location>
        <begin position="197"/>
        <end position="207"/>
    </location>
</feature>
<feature type="helix" evidence="4">
    <location>
        <begin position="208"/>
        <end position="210"/>
    </location>
</feature>
<feature type="helix" evidence="4">
    <location>
        <begin position="212"/>
        <end position="214"/>
    </location>
</feature>
<feature type="strand" evidence="4">
    <location>
        <begin position="223"/>
        <end position="229"/>
    </location>
</feature>
<feature type="helix" evidence="4">
    <location>
        <begin position="230"/>
        <end position="232"/>
    </location>
</feature>
<feature type="helix" evidence="4">
    <location>
        <begin position="233"/>
        <end position="243"/>
    </location>
</feature>
<feature type="helix" evidence="4">
    <location>
        <begin position="244"/>
        <end position="246"/>
    </location>
</feature>
<feature type="strand" evidence="4">
    <location>
        <begin position="252"/>
        <end position="256"/>
    </location>
</feature>
<feature type="helix" evidence="4">
    <location>
        <begin position="274"/>
        <end position="276"/>
    </location>
</feature>
<feature type="helix" evidence="4">
    <location>
        <begin position="284"/>
        <end position="294"/>
    </location>
</feature>
<feature type="helix" evidence="4">
    <location>
        <begin position="313"/>
        <end position="315"/>
    </location>
</feature>
<feature type="helix" evidence="4">
    <location>
        <begin position="317"/>
        <end position="325"/>
    </location>
</feature>
<feature type="helix" evidence="4">
    <location>
        <begin position="329"/>
        <end position="340"/>
    </location>
</feature>
<feature type="helix" evidence="4">
    <location>
        <begin position="346"/>
        <end position="370"/>
    </location>
</feature>
<feature type="helix" evidence="4">
    <location>
        <begin position="373"/>
        <end position="380"/>
    </location>
</feature>
<feature type="helix" evidence="4">
    <location>
        <begin position="382"/>
        <end position="384"/>
    </location>
</feature>
<name>SYW_ENCCU</name>
<evidence type="ECO:0000250" key="1"/>
<evidence type="ECO:0000269" key="2">
    <source>
    </source>
</evidence>
<evidence type="ECO:0000305" key="3"/>
<evidence type="ECO:0007829" key="4">
    <source>
        <dbReference type="PDB" id="3TZE"/>
    </source>
</evidence>
<comment type="catalytic activity">
    <reaction>
        <text>tRNA(Trp) + L-tryptophan + ATP = L-tryptophyl-tRNA(Trp) + AMP + diphosphate + H(+)</text>
        <dbReference type="Rhea" id="RHEA:24080"/>
        <dbReference type="Rhea" id="RHEA-COMP:9671"/>
        <dbReference type="Rhea" id="RHEA-COMP:9705"/>
        <dbReference type="ChEBI" id="CHEBI:15378"/>
        <dbReference type="ChEBI" id="CHEBI:30616"/>
        <dbReference type="ChEBI" id="CHEBI:33019"/>
        <dbReference type="ChEBI" id="CHEBI:57912"/>
        <dbReference type="ChEBI" id="CHEBI:78442"/>
        <dbReference type="ChEBI" id="CHEBI:78535"/>
        <dbReference type="ChEBI" id="CHEBI:456215"/>
        <dbReference type="EC" id="6.1.1.2"/>
    </reaction>
</comment>
<comment type="subunit">
    <text evidence="1">Homodimer.</text>
</comment>
<comment type="developmental stage">
    <text evidence="2">Expressed in late sporogonial stages.</text>
</comment>
<comment type="similarity">
    <text evidence="3">Belongs to the class-I aminoacyl-tRNA synthetase family.</text>
</comment>
<sequence length="385" mass="44189">MAEQRITPWDVEVVSTDEVPVAIDYDKIINQFGCEKFNQALADRLEKLSGKPAHYFFRRGIVFAHRDFNLLLDEIANNRPFYLYTGRGPSSKTMHIGHTIPFLLCKYMQDAFKIRLVIQITDDEKFLWKSMRLEDAMAYGRENIKDIVALGFDPKLTYIFSNVEASHHFEENILKISKTINLNEAIKVFGFDMSSNIGQVGFPAKEIAPCFSSSFRFIGKGAMCLVPAAVDQDPFFRLARDKAKALGEKKPSSIYVSLLPDLKGVNRKMSASDPNSSIYLDDAQDTIRKKIIAYAYSGGRKTLEEHREKGGDIDVDVPFEYLKYFLDDDQELEKYRSGYIKGEITSKEMKEKCVVVIQEFVSRYQESRKRVTDDDLRAFIDINKF</sequence>
<keyword id="KW-0002">3D-structure</keyword>
<keyword id="KW-0030">Aminoacyl-tRNA synthetase</keyword>
<keyword id="KW-0067">ATP-binding</keyword>
<keyword id="KW-0436">Ligase</keyword>
<keyword id="KW-0547">Nucleotide-binding</keyword>
<keyword id="KW-0648">Protein biosynthesis</keyword>
<keyword id="KW-1185">Reference proteome</keyword>